<gene>
    <name type="primary">ZNF506</name>
</gene>
<organism>
    <name type="scientific">Homo sapiens</name>
    <name type="common">Human</name>
    <dbReference type="NCBI Taxonomy" id="9606"/>
    <lineage>
        <taxon>Eukaryota</taxon>
        <taxon>Metazoa</taxon>
        <taxon>Chordata</taxon>
        <taxon>Craniata</taxon>
        <taxon>Vertebrata</taxon>
        <taxon>Euteleostomi</taxon>
        <taxon>Mammalia</taxon>
        <taxon>Eutheria</taxon>
        <taxon>Euarchontoglires</taxon>
        <taxon>Primates</taxon>
        <taxon>Haplorrhini</taxon>
        <taxon>Catarrhini</taxon>
        <taxon>Hominidae</taxon>
        <taxon>Homo</taxon>
    </lineage>
</organism>
<keyword id="KW-0025">Alternative splicing</keyword>
<keyword id="KW-0238">DNA-binding</keyword>
<keyword id="KW-0479">Metal-binding</keyword>
<keyword id="KW-0539">Nucleus</keyword>
<keyword id="KW-1267">Proteomics identification</keyword>
<keyword id="KW-1185">Reference proteome</keyword>
<keyword id="KW-0677">Repeat</keyword>
<keyword id="KW-0804">Transcription</keyword>
<keyword id="KW-0805">Transcription regulation</keyword>
<keyword id="KW-0862">Zinc</keyword>
<keyword id="KW-0863">Zinc-finger</keyword>
<dbReference type="EMBL" id="AL136548">
    <property type="protein sequence ID" value="CAB66483.1"/>
    <property type="molecule type" value="mRNA"/>
</dbReference>
<dbReference type="EMBL" id="AK095575">
    <property type="protein sequence ID" value="BAG53088.1"/>
    <property type="molecule type" value="mRNA"/>
</dbReference>
<dbReference type="EMBL" id="AK122848">
    <property type="status" value="NOT_ANNOTATED_CDS"/>
    <property type="molecule type" value="mRNA"/>
</dbReference>
<dbReference type="EMBL" id="AC011477">
    <property type="status" value="NOT_ANNOTATED_CDS"/>
    <property type="molecule type" value="Genomic_DNA"/>
</dbReference>
<dbReference type="EMBL" id="CH471106">
    <property type="protein sequence ID" value="EAW84861.1"/>
    <property type="molecule type" value="Genomic_DNA"/>
</dbReference>
<dbReference type="CCDS" id="CCDS42531.1">
    <molecule id="Q5JVG8-1"/>
</dbReference>
<dbReference type="CCDS" id="CCDS46027.1">
    <molecule id="Q5JVG8-2"/>
</dbReference>
<dbReference type="RefSeq" id="NP_001092739.1">
    <molecule id="Q5JVG8-1"/>
    <property type="nucleotide sequence ID" value="NM_001099269.3"/>
</dbReference>
<dbReference type="RefSeq" id="NP_001138876.1">
    <molecule id="Q5JVG8-2"/>
    <property type="nucleotide sequence ID" value="NM_001145404.2"/>
</dbReference>
<dbReference type="SMR" id="Q5JVG8"/>
<dbReference type="BioGRID" id="136647">
    <property type="interactions" value="3"/>
</dbReference>
<dbReference type="FunCoup" id="Q5JVG8">
    <property type="interactions" value="19"/>
</dbReference>
<dbReference type="STRING" id="9606.ENSP00000393835"/>
<dbReference type="GlyGen" id="Q5JVG8">
    <property type="glycosylation" value="1 site, 1 O-linked glycan (1 site)"/>
</dbReference>
<dbReference type="iPTMnet" id="Q5JVG8"/>
<dbReference type="PhosphoSitePlus" id="Q5JVG8"/>
<dbReference type="BioMuta" id="ZNF506"/>
<dbReference type="DMDM" id="296453043"/>
<dbReference type="jPOST" id="Q5JVG8"/>
<dbReference type="MassIVE" id="Q5JVG8"/>
<dbReference type="PaxDb" id="9606-ENSP00000393835"/>
<dbReference type="PeptideAtlas" id="Q5JVG8"/>
<dbReference type="ProteomicsDB" id="63333">
    <molecule id="Q5JVG8-1"/>
</dbReference>
<dbReference type="ProteomicsDB" id="63334">
    <molecule id="Q5JVG8-2"/>
</dbReference>
<dbReference type="Pumba" id="Q5JVG8"/>
<dbReference type="Antibodypedia" id="67878">
    <property type="antibodies" value="77 antibodies from 12 providers"/>
</dbReference>
<dbReference type="DNASU" id="440515"/>
<dbReference type="Ensembl" id="ENST00000450683.6">
    <molecule id="Q5JVG8-2"/>
    <property type="protein sequence ID" value="ENSP00000408892.1"/>
    <property type="gene ID" value="ENSG00000081665.15"/>
</dbReference>
<dbReference type="Ensembl" id="ENST00000540806.7">
    <molecule id="Q5JVG8-1"/>
    <property type="protein sequence ID" value="ENSP00000440625.1"/>
    <property type="gene ID" value="ENSG00000081665.15"/>
</dbReference>
<dbReference type="Ensembl" id="ENST00000591639.5">
    <molecule id="Q5JVG8-1"/>
    <property type="protein sequence ID" value="ENSP00000468150.1"/>
    <property type="gene ID" value="ENSG00000081665.15"/>
</dbReference>
<dbReference type="GeneID" id="440515"/>
<dbReference type="KEGG" id="hsa:440515"/>
<dbReference type="MANE-Select" id="ENST00000540806.7">
    <property type="protein sequence ID" value="ENSP00000440625.1"/>
    <property type="RefSeq nucleotide sequence ID" value="NM_001099269.3"/>
    <property type="RefSeq protein sequence ID" value="NP_001092739.1"/>
</dbReference>
<dbReference type="UCSC" id="uc002noh.4">
    <molecule id="Q5JVG8-1"/>
    <property type="organism name" value="human"/>
</dbReference>
<dbReference type="AGR" id="HGNC:23780"/>
<dbReference type="CTD" id="440515"/>
<dbReference type="DisGeNET" id="440515"/>
<dbReference type="GeneCards" id="ZNF506"/>
<dbReference type="HGNC" id="HGNC:23780">
    <property type="gene designation" value="ZNF506"/>
</dbReference>
<dbReference type="HPA" id="ENSG00000081665">
    <property type="expression patterns" value="Low tissue specificity"/>
</dbReference>
<dbReference type="neXtProt" id="NX_Q5JVG8"/>
<dbReference type="OpenTargets" id="ENSG00000081665"/>
<dbReference type="PharmGKB" id="PA134884301"/>
<dbReference type="VEuPathDB" id="HostDB:ENSG00000081665"/>
<dbReference type="eggNOG" id="KOG1721">
    <property type="taxonomic scope" value="Eukaryota"/>
</dbReference>
<dbReference type="GeneTree" id="ENSGT00940000153236"/>
<dbReference type="HOGENOM" id="CLU_002678_0_10_1"/>
<dbReference type="InParanoid" id="Q5JVG8"/>
<dbReference type="OMA" id="KKHEMIA"/>
<dbReference type="OrthoDB" id="9044188at2759"/>
<dbReference type="PAN-GO" id="Q5JVG8">
    <property type="GO annotations" value="3 GO annotations based on evolutionary models"/>
</dbReference>
<dbReference type="PhylomeDB" id="Q5JVG8"/>
<dbReference type="TreeFam" id="TF342117"/>
<dbReference type="PathwayCommons" id="Q5JVG8"/>
<dbReference type="Reactome" id="R-HSA-212436">
    <property type="pathway name" value="Generic Transcription Pathway"/>
</dbReference>
<dbReference type="BioGRID-ORCS" id="440515">
    <property type="hits" value="106 hits in 1101 CRISPR screens"/>
</dbReference>
<dbReference type="ChiTaRS" id="ZNF506">
    <property type="organism name" value="human"/>
</dbReference>
<dbReference type="GenomeRNAi" id="440515"/>
<dbReference type="Pharos" id="Q5JVG8">
    <property type="development level" value="Tdark"/>
</dbReference>
<dbReference type="PRO" id="PR:Q5JVG8"/>
<dbReference type="Proteomes" id="UP000005640">
    <property type="component" value="Chromosome 19"/>
</dbReference>
<dbReference type="RNAct" id="Q5JVG8">
    <property type="molecule type" value="protein"/>
</dbReference>
<dbReference type="Bgee" id="ENSG00000081665">
    <property type="expression patterns" value="Expressed in colonic epithelium and 188 other cell types or tissues"/>
</dbReference>
<dbReference type="ExpressionAtlas" id="Q5JVG8">
    <property type="expression patterns" value="baseline and differential"/>
</dbReference>
<dbReference type="GO" id="GO:0005730">
    <property type="term" value="C:nucleolus"/>
    <property type="evidence" value="ECO:0000314"/>
    <property type="project" value="LIFEdb"/>
</dbReference>
<dbReference type="GO" id="GO:0000981">
    <property type="term" value="F:DNA-binding transcription factor activity, RNA polymerase II-specific"/>
    <property type="evidence" value="ECO:0000318"/>
    <property type="project" value="GO_Central"/>
</dbReference>
<dbReference type="GO" id="GO:0000978">
    <property type="term" value="F:RNA polymerase II cis-regulatory region sequence-specific DNA binding"/>
    <property type="evidence" value="ECO:0000318"/>
    <property type="project" value="GO_Central"/>
</dbReference>
<dbReference type="GO" id="GO:0008270">
    <property type="term" value="F:zinc ion binding"/>
    <property type="evidence" value="ECO:0007669"/>
    <property type="project" value="UniProtKB-KW"/>
</dbReference>
<dbReference type="GO" id="GO:0006355">
    <property type="term" value="P:regulation of DNA-templated transcription"/>
    <property type="evidence" value="ECO:0000318"/>
    <property type="project" value="GO_Central"/>
</dbReference>
<dbReference type="CDD" id="cd07765">
    <property type="entry name" value="KRAB_A-box"/>
    <property type="match status" value="1"/>
</dbReference>
<dbReference type="FunFam" id="3.30.160.60:FF:002472">
    <property type="match status" value="1"/>
</dbReference>
<dbReference type="FunFam" id="3.30.160.60:FF:000034">
    <property type="entry name" value="zinc finger protein 25"/>
    <property type="match status" value="2"/>
</dbReference>
<dbReference type="FunFam" id="3.30.160.60:FF:000120">
    <property type="entry name" value="Zinc finger protein 430"/>
    <property type="match status" value="1"/>
</dbReference>
<dbReference type="FunFam" id="3.30.160.60:FF:002254">
    <property type="entry name" value="Zinc finger protein 540"/>
    <property type="match status" value="1"/>
</dbReference>
<dbReference type="FunFam" id="3.30.160.60:FF:001381">
    <property type="entry name" value="zinc finger protein 566 isoform X2"/>
    <property type="match status" value="1"/>
</dbReference>
<dbReference type="FunFam" id="3.30.160.60:FF:000362">
    <property type="entry name" value="Zinc finger protein 606"/>
    <property type="match status" value="1"/>
</dbReference>
<dbReference type="FunFam" id="3.30.160.60:FF:002679">
    <property type="entry name" value="Zinc finger protein 726"/>
    <property type="match status" value="1"/>
</dbReference>
<dbReference type="Gene3D" id="6.10.140.140">
    <property type="match status" value="1"/>
</dbReference>
<dbReference type="Gene3D" id="3.30.160.60">
    <property type="entry name" value="Classic Zinc Finger"/>
    <property type="match status" value="9"/>
</dbReference>
<dbReference type="InterPro" id="IPR001909">
    <property type="entry name" value="KRAB"/>
</dbReference>
<dbReference type="InterPro" id="IPR036051">
    <property type="entry name" value="KRAB_dom_sf"/>
</dbReference>
<dbReference type="InterPro" id="IPR036236">
    <property type="entry name" value="Znf_C2H2_sf"/>
</dbReference>
<dbReference type="InterPro" id="IPR013087">
    <property type="entry name" value="Znf_C2H2_type"/>
</dbReference>
<dbReference type="PANTHER" id="PTHR24381">
    <property type="entry name" value="ZINC FINGER PROTEIN"/>
    <property type="match status" value="1"/>
</dbReference>
<dbReference type="PANTHER" id="PTHR24381:SF404">
    <property type="entry name" value="ZINC FINGER PROTEIN 737"/>
    <property type="match status" value="1"/>
</dbReference>
<dbReference type="Pfam" id="PF01352">
    <property type="entry name" value="KRAB"/>
    <property type="match status" value="1"/>
</dbReference>
<dbReference type="Pfam" id="PF00096">
    <property type="entry name" value="zf-C2H2"/>
    <property type="match status" value="7"/>
</dbReference>
<dbReference type="Pfam" id="PF13912">
    <property type="entry name" value="zf-C2H2_6"/>
    <property type="match status" value="1"/>
</dbReference>
<dbReference type="SMART" id="SM00349">
    <property type="entry name" value="KRAB"/>
    <property type="match status" value="1"/>
</dbReference>
<dbReference type="SMART" id="SM00355">
    <property type="entry name" value="ZnF_C2H2"/>
    <property type="match status" value="8"/>
</dbReference>
<dbReference type="SUPFAM" id="SSF57667">
    <property type="entry name" value="beta-beta-alpha zinc fingers"/>
    <property type="match status" value="5"/>
</dbReference>
<dbReference type="SUPFAM" id="SSF109640">
    <property type="entry name" value="KRAB domain (Kruppel-associated box)"/>
    <property type="match status" value="1"/>
</dbReference>
<dbReference type="PROSITE" id="PS50805">
    <property type="entry name" value="KRAB"/>
    <property type="match status" value="1"/>
</dbReference>
<dbReference type="PROSITE" id="PS00028">
    <property type="entry name" value="ZINC_FINGER_C2H2_1"/>
    <property type="match status" value="8"/>
</dbReference>
<dbReference type="PROSITE" id="PS50157">
    <property type="entry name" value="ZINC_FINGER_C2H2_2"/>
    <property type="match status" value="8"/>
</dbReference>
<evidence type="ECO:0000255" key="1">
    <source>
        <dbReference type="PROSITE-ProRule" id="PRU00042"/>
    </source>
</evidence>
<evidence type="ECO:0000255" key="2">
    <source>
        <dbReference type="PROSITE-ProRule" id="PRU00119"/>
    </source>
</evidence>
<evidence type="ECO:0000303" key="3">
    <source>
    </source>
</evidence>
<evidence type="ECO:0000305" key="4"/>
<accession>Q5JVG8</accession>
<accession>B3KTH6</accession>
<sequence length="444" mass="51537">MGPLQFRDVAIEFSLEEWHCLDAAQRNLYRDVMLENYRNLIFLGIVVSKPNLITCLEQGKKPLTMKRHEMIAKPPVMYSHFAQDLWSEQSIKDSFQKVILRRYEKCRHDNLQLKKGCESVDECPVHKRGYNGLKQCLATTQRKIFQCDEYVKFLHKFSNSNKHKIRDTGKKSFKCIEYGKTFNQSSTRTTYKKIDAGEKRYKCEECGKAYKQSSHLTTHKKIHTGEKPYKCEECGKAYKQSCNLTTHKIIHTGEKPYRCRECGKAFNHPATLFSHKKIHTGEKPYKCDKCGKAFISSSTLTKHEIIHTGEKPYKCEECGKAFNRSSNLTKHKRIHTGDVPYKCDECGKTFTWYSSLSKHKRAHTGEKPYKCEECGKAFTAFSTLTEHKIIHTGEKPYKCEECGKAFNWSSALNKHKKIHIRQKPCIVKNVENLLNVPQPLISIR</sequence>
<feature type="chain" id="PRO_0000047624" description="Zinc finger protein 506">
    <location>
        <begin position="1"/>
        <end position="444"/>
    </location>
</feature>
<feature type="domain" description="KRAB" evidence="2">
    <location>
        <begin position="4"/>
        <end position="75"/>
    </location>
</feature>
<feature type="zinc finger region" description="C2H2-type 1" evidence="1">
    <location>
        <begin position="201"/>
        <end position="223"/>
    </location>
</feature>
<feature type="zinc finger region" description="C2H2-type 2" evidence="1">
    <location>
        <begin position="229"/>
        <end position="251"/>
    </location>
</feature>
<feature type="zinc finger region" description="C2H2-type 3" evidence="1">
    <location>
        <begin position="257"/>
        <end position="279"/>
    </location>
</feature>
<feature type="zinc finger region" description="C2H2-type 4" evidence="1">
    <location>
        <begin position="285"/>
        <end position="307"/>
    </location>
</feature>
<feature type="zinc finger region" description="C2H2-type 5" evidence="1">
    <location>
        <begin position="313"/>
        <end position="335"/>
    </location>
</feature>
<feature type="zinc finger region" description="C2H2-type 6" evidence="1">
    <location>
        <begin position="341"/>
        <end position="363"/>
    </location>
</feature>
<feature type="zinc finger region" description="C2H2-type 7" evidence="1">
    <location>
        <begin position="369"/>
        <end position="391"/>
    </location>
</feature>
<feature type="zinc finger region" description="C2H2-type 8" evidence="1">
    <location>
        <begin position="397"/>
        <end position="419"/>
    </location>
</feature>
<feature type="splice variant" id="VSP_040653" description="In isoform 2." evidence="3">
    <location>
        <begin position="44"/>
        <end position="75"/>
    </location>
</feature>
<feature type="sequence variant" id="VAR_057421" description="In dbSNP:rs16996376.">
    <original>T</original>
    <variation>P</variation>
    <location>
        <position position="189"/>
    </location>
</feature>
<feature type="sequence conflict" description="In Ref. 1; CAB66483." evidence="4" ref="1">
    <original>E</original>
    <variation>K</variation>
    <location>
        <position position="118"/>
    </location>
</feature>
<name>ZN506_HUMAN</name>
<comment type="function">
    <text>May be involved in transcriptional regulation.</text>
</comment>
<comment type="subcellular location">
    <subcellularLocation>
        <location evidence="4">Nucleus</location>
    </subcellularLocation>
</comment>
<comment type="alternative products">
    <event type="alternative splicing"/>
    <isoform>
        <id>Q5JVG8-1</id>
        <name>1</name>
        <sequence type="displayed"/>
    </isoform>
    <isoform>
        <id>Q5JVG8-2</id>
        <name>2</name>
        <sequence type="described" ref="VSP_040653"/>
    </isoform>
</comment>
<comment type="similarity">
    <text evidence="4">Belongs to the krueppel C2H2-type zinc-finger protein family.</text>
</comment>
<protein>
    <recommendedName>
        <fullName>Zinc finger protein 506</fullName>
    </recommendedName>
</protein>
<reference key="1">
    <citation type="journal article" date="2001" name="Genome Res.">
        <title>Towards a catalog of human genes and proteins: sequencing and analysis of 500 novel complete protein coding human cDNAs.</title>
        <authorList>
            <person name="Wiemann S."/>
            <person name="Weil B."/>
            <person name="Wellenreuther R."/>
            <person name="Gassenhuber J."/>
            <person name="Glassl S."/>
            <person name="Ansorge W."/>
            <person name="Boecher M."/>
            <person name="Bloecker H."/>
            <person name="Bauersachs S."/>
            <person name="Blum H."/>
            <person name="Lauber J."/>
            <person name="Duesterhoeft A."/>
            <person name="Beyer A."/>
            <person name="Koehrer K."/>
            <person name="Strack N."/>
            <person name="Mewes H.-W."/>
            <person name="Ottenwaelder B."/>
            <person name="Obermaier B."/>
            <person name="Tampe J."/>
            <person name="Heubner D."/>
            <person name="Wambutt R."/>
            <person name="Korn B."/>
            <person name="Klein M."/>
            <person name="Poustka A."/>
        </authorList>
    </citation>
    <scope>NUCLEOTIDE SEQUENCE [LARGE SCALE MRNA] (ISOFORM 1)</scope>
    <source>
        <tissue>Amygdala</tissue>
    </source>
</reference>
<reference key="2">
    <citation type="journal article" date="2004" name="Nat. Genet.">
        <title>Complete sequencing and characterization of 21,243 full-length human cDNAs.</title>
        <authorList>
            <person name="Ota T."/>
            <person name="Suzuki Y."/>
            <person name="Nishikawa T."/>
            <person name="Otsuki T."/>
            <person name="Sugiyama T."/>
            <person name="Irie R."/>
            <person name="Wakamatsu A."/>
            <person name="Hayashi K."/>
            <person name="Sato H."/>
            <person name="Nagai K."/>
            <person name="Kimura K."/>
            <person name="Makita H."/>
            <person name="Sekine M."/>
            <person name="Obayashi M."/>
            <person name="Nishi T."/>
            <person name="Shibahara T."/>
            <person name="Tanaka T."/>
            <person name="Ishii S."/>
            <person name="Yamamoto J."/>
            <person name="Saito K."/>
            <person name="Kawai Y."/>
            <person name="Isono Y."/>
            <person name="Nakamura Y."/>
            <person name="Nagahari K."/>
            <person name="Murakami K."/>
            <person name="Yasuda T."/>
            <person name="Iwayanagi T."/>
            <person name="Wagatsuma M."/>
            <person name="Shiratori A."/>
            <person name="Sudo H."/>
            <person name="Hosoiri T."/>
            <person name="Kaku Y."/>
            <person name="Kodaira H."/>
            <person name="Kondo H."/>
            <person name="Sugawara M."/>
            <person name="Takahashi M."/>
            <person name="Kanda K."/>
            <person name="Yokoi T."/>
            <person name="Furuya T."/>
            <person name="Kikkawa E."/>
            <person name="Omura Y."/>
            <person name="Abe K."/>
            <person name="Kamihara K."/>
            <person name="Katsuta N."/>
            <person name="Sato K."/>
            <person name="Tanikawa M."/>
            <person name="Yamazaki M."/>
            <person name="Ninomiya K."/>
            <person name="Ishibashi T."/>
            <person name="Yamashita H."/>
            <person name="Murakawa K."/>
            <person name="Fujimori K."/>
            <person name="Tanai H."/>
            <person name="Kimata M."/>
            <person name="Watanabe M."/>
            <person name="Hiraoka S."/>
            <person name="Chiba Y."/>
            <person name="Ishida S."/>
            <person name="Ono Y."/>
            <person name="Takiguchi S."/>
            <person name="Watanabe S."/>
            <person name="Yosida M."/>
            <person name="Hotuta T."/>
            <person name="Kusano J."/>
            <person name="Kanehori K."/>
            <person name="Takahashi-Fujii A."/>
            <person name="Hara H."/>
            <person name="Tanase T.-O."/>
            <person name="Nomura Y."/>
            <person name="Togiya S."/>
            <person name="Komai F."/>
            <person name="Hara R."/>
            <person name="Takeuchi K."/>
            <person name="Arita M."/>
            <person name="Imose N."/>
            <person name="Musashino K."/>
            <person name="Yuuki H."/>
            <person name="Oshima A."/>
            <person name="Sasaki N."/>
            <person name="Aotsuka S."/>
            <person name="Yoshikawa Y."/>
            <person name="Matsunawa H."/>
            <person name="Ichihara T."/>
            <person name="Shiohata N."/>
            <person name="Sano S."/>
            <person name="Moriya S."/>
            <person name="Momiyama H."/>
            <person name="Satoh N."/>
            <person name="Takami S."/>
            <person name="Terashima Y."/>
            <person name="Suzuki O."/>
            <person name="Nakagawa S."/>
            <person name="Senoh A."/>
            <person name="Mizoguchi H."/>
            <person name="Goto Y."/>
            <person name="Shimizu F."/>
            <person name="Wakebe H."/>
            <person name="Hishigaki H."/>
            <person name="Watanabe T."/>
            <person name="Sugiyama A."/>
            <person name="Takemoto M."/>
            <person name="Kawakami B."/>
            <person name="Yamazaki M."/>
            <person name="Watanabe K."/>
            <person name="Kumagai A."/>
            <person name="Itakura S."/>
            <person name="Fukuzumi Y."/>
            <person name="Fujimori Y."/>
            <person name="Komiyama M."/>
            <person name="Tashiro H."/>
            <person name="Tanigami A."/>
            <person name="Fujiwara T."/>
            <person name="Ono T."/>
            <person name="Yamada K."/>
            <person name="Fujii Y."/>
            <person name="Ozaki K."/>
            <person name="Hirao M."/>
            <person name="Ohmori Y."/>
            <person name="Kawabata A."/>
            <person name="Hikiji T."/>
            <person name="Kobatake N."/>
            <person name="Inagaki H."/>
            <person name="Ikema Y."/>
            <person name="Okamoto S."/>
            <person name="Okitani R."/>
            <person name="Kawakami T."/>
            <person name="Noguchi S."/>
            <person name="Itoh T."/>
            <person name="Shigeta K."/>
            <person name="Senba T."/>
            <person name="Matsumura K."/>
            <person name="Nakajima Y."/>
            <person name="Mizuno T."/>
            <person name="Morinaga M."/>
            <person name="Sasaki M."/>
            <person name="Togashi T."/>
            <person name="Oyama M."/>
            <person name="Hata H."/>
            <person name="Watanabe M."/>
            <person name="Komatsu T."/>
            <person name="Mizushima-Sugano J."/>
            <person name="Satoh T."/>
            <person name="Shirai Y."/>
            <person name="Takahashi Y."/>
            <person name="Nakagawa K."/>
            <person name="Okumura K."/>
            <person name="Nagase T."/>
            <person name="Nomura N."/>
            <person name="Kikuchi H."/>
            <person name="Masuho Y."/>
            <person name="Yamashita R."/>
            <person name="Nakai K."/>
            <person name="Yada T."/>
            <person name="Nakamura Y."/>
            <person name="Ohara O."/>
            <person name="Isogai T."/>
            <person name="Sugano S."/>
        </authorList>
    </citation>
    <scope>NUCLEOTIDE SEQUENCE [LARGE SCALE MRNA] (ISOFORMS 1 AND 2)</scope>
    <source>
        <tissue>Brain</tissue>
    </source>
</reference>
<reference key="3">
    <citation type="journal article" date="2004" name="Nature">
        <title>The DNA sequence and biology of human chromosome 19.</title>
        <authorList>
            <person name="Grimwood J."/>
            <person name="Gordon L.A."/>
            <person name="Olsen A.S."/>
            <person name="Terry A."/>
            <person name="Schmutz J."/>
            <person name="Lamerdin J.E."/>
            <person name="Hellsten U."/>
            <person name="Goodstein D."/>
            <person name="Couronne O."/>
            <person name="Tran-Gyamfi M."/>
            <person name="Aerts A."/>
            <person name="Altherr M."/>
            <person name="Ashworth L."/>
            <person name="Bajorek E."/>
            <person name="Black S."/>
            <person name="Branscomb E."/>
            <person name="Caenepeel S."/>
            <person name="Carrano A.V."/>
            <person name="Caoile C."/>
            <person name="Chan Y.M."/>
            <person name="Christensen M."/>
            <person name="Cleland C.A."/>
            <person name="Copeland A."/>
            <person name="Dalin E."/>
            <person name="Dehal P."/>
            <person name="Denys M."/>
            <person name="Detter J.C."/>
            <person name="Escobar J."/>
            <person name="Flowers D."/>
            <person name="Fotopulos D."/>
            <person name="Garcia C."/>
            <person name="Georgescu A.M."/>
            <person name="Glavina T."/>
            <person name="Gomez M."/>
            <person name="Gonzales E."/>
            <person name="Groza M."/>
            <person name="Hammon N."/>
            <person name="Hawkins T."/>
            <person name="Haydu L."/>
            <person name="Ho I."/>
            <person name="Huang W."/>
            <person name="Israni S."/>
            <person name="Jett J."/>
            <person name="Kadner K."/>
            <person name="Kimball H."/>
            <person name="Kobayashi A."/>
            <person name="Larionov V."/>
            <person name="Leem S.-H."/>
            <person name="Lopez F."/>
            <person name="Lou Y."/>
            <person name="Lowry S."/>
            <person name="Malfatti S."/>
            <person name="Martinez D."/>
            <person name="McCready P.M."/>
            <person name="Medina C."/>
            <person name="Morgan J."/>
            <person name="Nelson K."/>
            <person name="Nolan M."/>
            <person name="Ovcharenko I."/>
            <person name="Pitluck S."/>
            <person name="Pollard M."/>
            <person name="Popkie A.P."/>
            <person name="Predki P."/>
            <person name="Quan G."/>
            <person name="Ramirez L."/>
            <person name="Rash S."/>
            <person name="Retterer J."/>
            <person name="Rodriguez A."/>
            <person name="Rogers S."/>
            <person name="Salamov A."/>
            <person name="Salazar A."/>
            <person name="She X."/>
            <person name="Smith D."/>
            <person name="Slezak T."/>
            <person name="Solovyev V."/>
            <person name="Thayer N."/>
            <person name="Tice H."/>
            <person name="Tsai M."/>
            <person name="Ustaszewska A."/>
            <person name="Vo N."/>
            <person name="Wagner M."/>
            <person name="Wheeler J."/>
            <person name="Wu K."/>
            <person name="Xie G."/>
            <person name="Yang J."/>
            <person name="Dubchak I."/>
            <person name="Furey T.S."/>
            <person name="DeJong P."/>
            <person name="Dickson M."/>
            <person name="Gordon D."/>
            <person name="Eichler E.E."/>
            <person name="Pennacchio L.A."/>
            <person name="Richardson P."/>
            <person name="Stubbs L."/>
            <person name="Rokhsar D.S."/>
            <person name="Myers R.M."/>
            <person name="Rubin E.M."/>
            <person name="Lucas S.M."/>
        </authorList>
    </citation>
    <scope>NUCLEOTIDE SEQUENCE [LARGE SCALE GENOMIC DNA]</scope>
</reference>
<reference key="4">
    <citation type="submission" date="2005-07" db="EMBL/GenBank/DDBJ databases">
        <authorList>
            <person name="Mural R.J."/>
            <person name="Istrail S."/>
            <person name="Sutton G.G."/>
            <person name="Florea L."/>
            <person name="Halpern A.L."/>
            <person name="Mobarry C.M."/>
            <person name="Lippert R."/>
            <person name="Walenz B."/>
            <person name="Shatkay H."/>
            <person name="Dew I."/>
            <person name="Miller J.R."/>
            <person name="Flanigan M.J."/>
            <person name="Edwards N.J."/>
            <person name="Bolanos R."/>
            <person name="Fasulo D."/>
            <person name="Halldorsson B.V."/>
            <person name="Hannenhalli S."/>
            <person name="Turner R."/>
            <person name="Yooseph S."/>
            <person name="Lu F."/>
            <person name="Nusskern D.R."/>
            <person name="Shue B.C."/>
            <person name="Zheng X.H."/>
            <person name="Zhong F."/>
            <person name="Delcher A.L."/>
            <person name="Huson D.H."/>
            <person name="Kravitz S.A."/>
            <person name="Mouchard L."/>
            <person name="Reinert K."/>
            <person name="Remington K.A."/>
            <person name="Clark A.G."/>
            <person name="Waterman M.S."/>
            <person name="Eichler E.E."/>
            <person name="Adams M.D."/>
            <person name="Hunkapiller M.W."/>
            <person name="Myers E.W."/>
            <person name="Venter J.C."/>
        </authorList>
    </citation>
    <scope>NUCLEOTIDE SEQUENCE [LARGE SCALE GENOMIC DNA]</scope>
</reference>
<proteinExistence type="evidence at protein level"/>